<comment type="function">
    <text evidence="1">Participates in the translocation of lipoproteins from the inner membrane to the outer membrane. Only forms a complex with a lipoprotein if the residue after the N-terminal Cys is not an aspartate (The Asp acts as a targeting signal to indicate that the lipoprotein should stay in the inner membrane).</text>
</comment>
<comment type="subunit">
    <text evidence="1">Monomer.</text>
</comment>
<comment type="subcellular location">
    <subcellularLocation>
        <location evidence="1">Periplasm</location>
    </subcellularLocation>
</comment>
<comment type="similarity">
    <text evidence="1">Belongs to the LolA family.</text>
</comment>
<organism>
    <name type="scientific">Pseudomonas syringae pv. tomato (strain ATCC BAA-871 / DC3000)</name>
    <dbReference type="NCBI Taxonomy" id="223283"/>
    <lineage>
        <taxon>Bacteria</taxon>
        <taxon>Pseudomonadati</taxon>
        <taxon>Pseudomonadota</taxon>
        <taxon>Gammaproteobacteria</taxon>
        <taxon>Pseudomonadales</taxon>
        <taxon>Pseudomonadaceae</taxon>
        <taxon>Pseudomonas</taxon>
    </lineage>
</organism>
<reference key="1">
    <citation type="journal article" date="2003" name="Proc. Natl. Acad. Sci. U.S.A.">
        <title>The complete genome sequence of the Arabidopsis and tomato pathogen Pseudomonas syringae pv. tomato DC3000.</title>
        <authorList>
            <person name="Buell C.R."/>
            <person name="Joardar V."/>
            <person name="Lindeberg M."/>
            <person name="Selengut J."/>
            <person name="Paulsen I.T."/>
            <person name="Gwinn M.L."/>
            <person name="Dodson R.J."/>
            <person name="DeBoy R.T."/>
            <person name="Durkin A.S."/>
            <person name="Kolonay J.F."/>
            <person name="Madupu R."/>
            <person name="Daugherty S.C."/>
            <person name="Brinkac L.M."/>
            <person name="Beanan M.J."/>
            <person name="Haft D.H."/>
            <person name="Nelson W.C."/>
            <person name="Davidsen T.M."/>
            <person name="Zafar N."/>
            <person name="Zhou L."/>
            <person name="Liu J."/>
            <person name="Yuan Q."/>
            <person name="Khouri H.M."/>
            <person name="Fedorova N.B."/>
            <person name="Tran B."/>
            <person name="Russell D."/>
            <person name="Berry K.J."/>
            <person name="Utterback T.R."/>
            <person name="Van Aken S.E."/>
            <person name="Feldblyum T.V."/>
            <person name="D'Ascenzo M."/>
            <person name="Deng W.-L."/>
            <person name="Ramos A.R."/>
            <person name="Alfano J.R."/>
            <person name="Cartinhour S."/>
            <person name="Chatterjee A.K."/>
            <person name="Delaney T.P."/>
            <person name="Lazarowitz S.G."/>
            <person name="Martin G.B."/>
            <person name="Schneider D.J."/>
            <person name="Tang X."/>
            <person name="Bender C.L."/>
            <person name="White O."/>
            <person name="Fraser C.M."/>
            <person name="Collmer A."/>
        </authorList>
    </citation>
    <scope>NUCLEOTIDE SEQUENCE [LARGE SCALE GENOMIC DNA]</scope>
    <source>
        <strain>ATCC BAA-871 / DC3000</strain>
    </source>
</reference>
<protein>
    <recommendedName>
        <fullName evidence="1">Outer-membrane lipoprotein carrier protein</fullName>
    </recommendedName>
</protein>
<gene>
    <name evidence="1" type="primary">lolA</name>
    <name type="ordered locus">PSPTO_3348</name>
</gene>
<feature type="signal peptide" evidence="1">
    <location>
        <begin position="1"/>
        <end position="21"/>
    </location>
</feature>
<feature type="chain" id="PRO_0000018271" description="Outer-membrane lipoprotein carrier protein">
    <location>
        <begin position="22"/>
        <end position="207"/>
    </location>
</feature>
<name>LOLA_PSESM</name>
<keyword id="KW-0143">Chaperone</keyword>
<keyword id="KW-0574">Periplasm</keyword>
<keyword id="KW-0653">Protein transport</keyword>
<keyword id="KW-1185">Reference proteome</keyword>
<keyword id="KW-0732">Signal</keyword>
<keyword id="KW-0813">Transport</keyword>
<proteinExistence type="inferred from homology"/>
<evidence type="ECO:0000255" key="1">
    <source>
        <dbReference type="HAMAP-Rule" id="MF_00240"/>
    </source>
</evidence>
<dbReference type="EMBL" id="AE016853">
    <property type="protein sequence ID" value="AAO56826.1"/>
    <property type="molecule type" value="Genomic_DNA"/>
</dbReference>
<dbReference type="RefSeq" id="NP_793131.1">
    <property type="nucleotide sequence ID" value="NC_004578.1"/>
</dbReference>
<dbReference type="RefSeq" id="WP_005767395.1">
    <property type="nucleotide sequence ID" value="NC_004578.1"/>
</dbReference>
<dbReference type="SMR" id="Q87ZS6"/>
<dbReference type="STRING" id="223283.PSPTO_3348"/>
<dbReference type="GeneID" id="1185007"/>
<dbReference type="KEGG" id="pst:PSPTO_3348"/>
<dbReference type="PATRIC" id="fig|223283.9.peg.3427"/>
<dbReference type="eggNOG" id="COG2834">
    <property type="taxonomic scope" value="Bacteria"/>
</dbReference>
<dbReference type="HOGENOM" id="CLU_087560_0_0_6"/>
<dbReference type="OrthoDB" id="9787361at2"/>
<dbReference type="PhylomeDB" id="Q87ZS6"/>
<dbReference type="Proteomes" id="UP000002515">
    <property type="component" value="Chromosome"/>
</dbReference>
<dbReference type="GO" id="GO:0030288">
    <property type="term" value="C:outer membrane-bounded periplasmic space"/>
    <property type="evidence" value="ECO:0007669"/>
    <property type="project" value="TreeGrafter"/>
</dbReference>
<dbReference type="GO" id="GO:0044874">
    <property type="term" value="P:lipoprotein localization to outer membrane"/>
    <property type="evidence" value="ECO:0007669"/>
    <property type="project" value="UniProtKB-UniRule"/>
</dbReference>
<dbReference type="GO" id="GO:0042953">
    <property type="term" value="P:lipoprotein transport"/>
    <property type="evidence" value="ECO:0007669"/>
    <property type="project" value="InterPro"/>
</dbReference>
<dbReference type="CDD" id="cd16325">
    <property type="entry name" value="LolA"/>
    <property type="match status" value="1"/>
</dbReference>
<dbReference type="Gene3D" id="2.50.20.10">
    <property type="entry name" value="Lipoprotein localisation LolA/LolB/LppX"/>
    <property type="match status" value="1"/>
</dbReference>
<dbReference type="HAMAP" id="MF_00240">
    <property type="entry name" value="LolA"/>
    <property type="match status" value="1"/>
</dbReference>
<dbReference type="InterPro" id="IPR029046">
    <property type="entry name" value="LolA/LolB/LppX"/>
</dbReference>
<dbReference type="InterPro" id="IPR004564">
    <property type="entry name" value="OM_lipoprot_carrier_LolA-like"/>
</dbReference>
<dbReference type="InterPro" id="IPR018323">
    <property type="entry name" value="OM_lipoprot_carrier_LolA_Pbac"/>
</dbReference>
<dbReference type="NCBIfam" id="TIGR00547">
    <property type="entry name" value="lolA"/>
    <property type="match status" value="1"/>
</dbReference>
<dbReference type="PANTHER" id="PTHR35869">
    <property type="entry name" value="OUTER-MEMBRANE LIPOPROTEIN CARRIER PROTEIN"/>
    <property type="match status" value="1"/>
</dbReference>
<dbReference type="PANTHER" id="PTHR35869:SF1">
    <property type="entry name" value="OUTER-MEMBRANE LIPOPROTEIN CARRIER PROTEIN"/>
    <property type="match status" value="1"/>
</dbReference>
<dbReference type="Pfam" id="PF03548">
    <property type="entry name" value="LolA"/>
    <property type="match status" value="1"/>
</dbReference>
<dbReference type="SUPFAM" id="SSF89392">
    <property type="entry name" value="Prokaryotic lipoproteins and lipoprotein localization factors"/>
    <property type="match status" value="1"/>
</dbReference>
<accession>Q87ZS6</accession>
<sequence length="207" mass="22849">MRLIRMLLATALTFSVIPAHADGKDVARLTQLLEKSQTLTARFSQLTLDGGGTQLQETTGEMALQRPGLFNWHTDAPQEQLMVSDGKKVSLWDPDLEQVTIKKLDQRLTQTPALLLSGDVSKISESFDITAKEAGGVIDFMLKPKTKDTLFDSLRLSFRNGIINDMQLIDSVGQRTNILFTGVKANESIAASKFQFQIPKGADVIQE</sequence>